<dbReference type="EMBL" id="BC073364">
    <property type="protein sequence ID" value="AAH73364.1"/>
    <property type="molecule type" value="mRNA"/>
</dbReference>
<dbReference type="RefSeq" id="NP_001085802.1">
    <property type="nucleotide sequence ID" value="NM_001092333.1"/>
</dbReference>
<dbReference type="RefSeq" id="XP_018097966.1">
    <property type="nucleotide sequence ID" value="XM_018242477.1"/>
</dbReference>
<dbReference type="RefSeq" id="XP_018097967.1">
    <property type="nucleotide sequence ID" value="XM_018242478.1"/>
</dbReference>
<dbReference type="SMR" id="Q6GNY6"/>
<dbReference type="DNASU" id="444229"/>
<dbReference type="GeneID" id="444229"/>
<dbReference type="KEGG" id="xla:444229"/>
<dbReference type="AGR" id="Xenbase:XB-GENE-6255701"/>
<dbReference type="CTD" id="444229"/>
<dbReference type="Xenbase" id="XB-GENE-6255701">
    <property type="gene designation" value="ostc.L"/>
</dbReference>
<dbReference type="OrthoDB" id="10256333at2759"/>
<dbReference type="UniPathway" id="UPA00378"/>
<dbReference type="Proteomes" id="UP000186698">
    <property type="component" value="Chromosome 1L"/>
</dbReference>
<dbReference type="Bgee" id="444229">
    <property type="expression patterns" value="Expressed in liver and 19 other cell types or tissues"/>
</dbReference>
<dbReference type="GO" id="GO:0008250">
    <property type="term" value="C:oligosaccharyltransferase complex"/>
    <property type="evidence" value="ECO:0000318"/>
    <property type="project" value="GO_Central"/>
</dbReference>
<dbReference type="GO" id="GO:0006486">
    <property type="term" value="P:protein glycosylation"/>
    <property type="evidence" value="ECO:0007669"/>
    <property type="project" value="UniProtKB-UniPathway"/>
</dbReference>
<dbReference type="InterPro" id="IPR021149">
    <property type="entry name" value="OligosaccharylTrfase_OST3/OST6"/>
</dbReference>
<dbReference type="InterPro" id="IPR042416">
    <property type="entry name" value="OSTC"/>
</dbReference>
<dbReference type="PANTHER" id="PTHR13160">
    <property type="entry name" value="OLIGOSACCHARYLTRANSFERASE COMPLEX SUBUNIT OSTC"/>
    <property type="match status" value="1"/>
</dbReference>
<dbReference type="PANTHER" id="PTHR13160:SF4">
    <property type="entry name" value="OLIGOSACCHARYLTRANSFERASE COMPLEX SUBUNIT OSTC"/>
    <property type="match status" value="1"/>
</dbReference>
<dbReference type="Pfam" id="PF04756">
    <property type="entry name" value="OST3_OST6"/>
    <property type="match status" value="1"/>
</dbReference>
<organism>
    <name type="scientific">Xenopus laevis</name>
    <name type="common">African clawed frog</name>
    <dbReference type="NCBI Taxonomy" id="8355"/>
    <lineage>
        <taxon>Eukaryota</taxon>
        <taxon>Metazoa</taxon>
        <taxon>Chordata</taxon>
        <taxon>Craniata</taxon>
        <taxon>Vertebrata</taxon>
        <taxon>Euteleostomi</taxon>
        <taxon>Amphibia</taxon>
        <taxon>Batrachia</taxon>
        <taxon>Anura</taxon>
        <taxon>Pipoidea</taxon>
        <taxon>Pipidae</taxon>
        <taxon>Xenopodinae</taxon>
        <taxon>Xenopus</taxon>
        <taxon>Xenopus</taxon>
    </lineage>
</organism>
<proteinExistence type="evidence at transcript level"/>
<feature type="chain" id="PRO_0000320606" description="Oligosaccharyltransferase complex subunit ostc-A">
    <location>
        <begin position="1"/>
        <end position="149"/>
    </location>
</feature>
<feature type="topological domain" description="Cytoplasmic" evidence="3">
    <location>
        <begin position="1"/>
        <end position="32"/>
    </location>
</feature>
<feature type="transmembrane region" description="Helical" evidence="3">
    <location>
        <begin position="33"/>
        <end position="53"/>
    </location>
</feature>
<feature type="topological domain" description="Extracellular" evidence="3">
    <location>
        <begin position="54"/>
        <end position="83"/>
    </location>
</feature>
<feature type="transmembrane region" description="Helical" evidence="3">
    <location>
        <begin position="84"/>
        <end position="104"/>
    </location>
</feature>
<feature type="topological domain" description="Cytoplasmic" evidence="3">
    <location>
        <begin position="105"/>
        <end position="117"/>
    </location>
</feature>
<feature type="transmembrane region" description="Helical" evidence="3">
    <location>
        <begin position="118"/>
        <end position="138"/>
    </location>
</feature>
<feature type="topological domain" description="Extracellular" evidence="3">
    <location>
        <begin position="139"/>
        <end position="149"/>
    </location>
</feature>
<gene>
    <name evidence="2" type="primary">ostc-a</name>
</gene>
<reference key="1">
    <citation type="submission" date="2004-06" db="EMBL/GenBank/DDBJ databases">
        <authorList>
            <consortium name="NIH - Xenopus Gene Collection (XGC) project"/>
        </authorList>
    </citation>
    <scope>NUCLEOTIDE SEQUENCE [LARGE SCALE MRNA]</scope>
    <source>
        <tissue>Spleen</tissue>
    </source>
</reference>
<protein>
    <recommendedName>
        <fullName evidence="2">Oligosaccharyltransferase complex subunit ostc-A</fullName>
    </recommendedName>
</protein>
<keyword id="KW-0472">Membrane</keyword>
<keyword id="KW-1185">Reference proteome</keyword>
<keyword id="KW-0812">Transmembrane</keyword>
<keyword id="KW-1133">Transmembrane helix</keyword>
<comment type="function">
    <text evidence="2">Specific component of the STT3A-containing form of the oligosaccharyl transferase (OST) complex that catalyzes the initial transfer of a defined glycan (Glc(3)Man(9)GlcNAc(2) in eukaryotes) from the lipid carrier dolichol-pyrophosphate to an asparagine residue within an Asn-X-Ser/Thr consensus motif in nascent polypeptide chains, the first step in protein N-glycosylation. N-glycosylation occurs cotranslationally and the complex associates with the Sec61 complex at the channel-forming translocon complex that mediates protein translocation across the endoplasmic reticulum (ER). All subunits are required for a maximal enzyme activity.</text>
</comment>
<comment type="pathway">
    <text evidence="2">Protein modification; protein glycosylation.</text>
</comment>
<comment type="subunit">
    <text evidence="1">Specific component of the STT3A-containing form of the oligosaccharyltransferase (OST) complex.</text>
</comment>
<comment type="subcellular location">
    <subcellularLocation>
        <location evidence="4">Membrane</location>
        <topology evidence="4">Multi-pass membrane protein</topology>
    </subcellularLocation>
</comment>
<comment type="similarity">
    <text evidence="4">Belongs to the OSTC family.</text>
</comment>
<accession>Q6GNY6</accession>
<name>OSTCA_XENLA</name>
<sequence length="149" mass="16841">MESLYRVPFTVLECPNLKLKKPSWLHMPSAMTVYAMVVVSYFLITGGIIYDVIVEPPSVGSMTDEHGHQRPVAFLAYRVNGQYIMEGLASSFLFTMGGLGFIILDRSNTPNIPKLNRFLLLFIGFVCVLLSFFMARVFMRMKLPGYLMG</sequence>
<evidence type="ECO:0000250" key="1">
    <source>
        <dbReference type="UniProtKB" id="P86218"/>
    </source>
</evidence>
<evidence type="ECO:0000250" key="2">
    <source>
        <dbReference type="UniProtKB" id="Q9NRP0"/>
    </source>
</evidence>
<evidence type="ECO:0000255" key="3"/>
<evidence type="ECO:0000305" key="4"/>